<proteinExistence type="evidence at protein level"/>
<gene>
    <name type="primary">qutR</name>
    <name type="ORF">AN1132</name>
</gene>
<keyword id="KW-0672">Quinate metabolism</keyword>
<keyword id="KW-1185">Reference proteome</keyword>
<keyword id="KW-0678">Repressor</keyword>
<keyword id="KW-0804">Transcription</keyword>
<keyword id="KW-0805">Transcription regulation</keyword>
<sequence>MSILVRPPKRRLADTENLDQNHRRVLRDFGQGNSASTPINTSADYGRFDERPGSGDGSRYASPFQELSSSQGSLTRVEDSLQTRRKFPPNASIVLIGIRGTGKSSLAVMLAASYGRRVIEADLYFQRVTGRCRGVYKREHTLSEYRRQEAIVMESLLMEHQENCVIVCGPGDVERNGQMRLREYAKTHPVIHIVRDLESIQSYLKARDTEKVRRFLELSGPIYRSCSNLEFFNVSEKGISDQPSAKDSQHYTQWDAEVDQRTQTTTPFLMLKRLQRDFLRFVALATGNIPELRNQLSPFPLHMQPIESRKFTYAATVPISHLLENDVDIEELESTADAFELKIDVSAAPSARLGTESNLADSISHTVATVRRNIIVPMIYHVESSVFPDSAPLRRSDASYLELVLHGLRLGPEFVTVDLSFEDSILSQIIGTKGSSKVIGHYSQTQPPPQGWSDPEYEAIYERAKKLGCDMVRLTQPATTIDDNFAVERFRHQIKTLPGPQLPVIAYNSGPLGRQSCCFNPVLTPVIPRSLISQSGTKGLPSITIQEAQEALYSSFVLDPMQFFVFGANTTYSLSPAMHNAAFKVRGMPHIYRIHQSPTLRGINYLVENPNFGGTSVSLPYKTEVIPLLHSMSPHARAIGAVNTLIPIRNLEGSTDNALDLEKNRAGPIKGLHGDNTDWIGIGICIRRGLSPANAIRPSTTGLIIGAGGMARAGIYAMIHLGVQNIFIWNRTVANAEKLAQHYMRLNLCTLGGSGSASYTIHVLKSLQESWPANYKQPTIVVSGIPAHRIGDQPAPNFQLPPQWIESPTGGVVVDLAYKPLNTPLMRQIRSLSHRGWAALDGLDVLPEQGFAQFELFTGCRAPRRLMRTVILQEYKEEEQGEEYDQSAMRTRLENLDGQPM</sequence>
<evidence type="ECO:0000256" key="1">
    <source>
        <dbReference type="SAM" id="MobiDB-lite"/>
    </source>
</evidence>
<evidence type="ECO:0000269" key="2">
    <source>
    </source>
</evidence>
<evidence type="ECO:0000269" key="3">
    <source>
    </source>
</evidence>
<evidence type="ECO:0000269" key="4">
    <source>
    </source>
</evidence>
<evidence type="ECO:0000269" key="5">
    <source>
    </source>
</evidence>
<evidence type="ECO:0000305" key="6"/>
<name>QUTR_EMENI</name>
<dbReference type="EMBL" id="M77664">
    <property type="protein sequence ID" value="AAC79663.1"/>
    <property type="molecule type" value="Genomic_DNA"/>
</dbReference>
<dbReference type="EMBL" id="M59935">
    <property type="protein sequence ID" value="AAC61876.1"/>
    <property type="molecule type" value="Genomic_DNA"/>
</dbReference>
<dbReference type="EMBL" id="AACD01000016">
    <property type="protein sequence ID" value="EAA66250.1"/>
    <property type="molecule type" value="Genomic_DNA"/>
</dbReference>
<dbReference type="EMBL" id="BN001308">
    <property type="protein sequence ID" value="CBF88080.1"/>
    <property type="molecule type" value="Genomic_DNA"/>
</dbReference>
<dbReference type="PIR" id="JH0262">
    <property type="entry name" value="JH0262"/>
</dbReference>
<dbReference type="RefSeq" id="XP_658736.1">
    <property type="nucleotide sequence ID" value="XM_653644.1"/>
</dbReference>
<dbReference type="SMR" id="Q00784"/>
<dbReference type="STRING" id="227321.Q00784"/>
<dbReference type="EnsemblFungi" id="CBF88080">
    <property type="protein sequence ID" value="CBF88080"/>
    <property type="gene ID" value="ANIA_01132"/>
</dbReference>
<dbReference type="KEGG" id="ani:ANIA_01132"/>
<dbReference type="VEuPathDB" id="FungiDB:AN1132"/>
<dbReference type="eggNOG" id="KOG0692">
    <property type="taxonomic scope" value="Eukaryota"/>
</dbReference>
<dbReference type="HOGENOM" id="CLU_008871_0_1_1"/>
<dbReference type="InParanoid" id="Q00784"/>
<dbReference type="OMA" id="AVYSMIH"/>
<dbReference type="OrthoDB" id="4415835at2759"/>
<dbReference type="Proteomes" id="UP000000560">
    <property type="component" value="Chromosome VIII"/>
</dbReference>
<dbReference type="GO" id="GO:0003855">
    <property type="term" value="F:3-dehydroquinate dehydratase activity"/>
    <property type="evidence" value="ECO:0007669"/>
    <property type="project" value="InterPro"/>
</dbReference>
<dbReference type="GO" id="GO:0003866">
    <property type="term" value="F:3-phosphoshikimate 1-carboxyvinyltransferase activity"/>
    <property type="evidence" value="ECO:0000318"/>
    <property type="project" value="GO_Central"/>
</dbReference>
<dbReference type="GO" id="GO:0004764">
    <property type="term" value="F:shikimate 3-dehydrogenase (NADP+) activity"/>
    <property type="evidence" value="ECO:0007669"/>
    <property type="project" value="InterPro"/>
</dbReference>
<dbReference type="GO" id="GO:0009423">
    <property type="term" value="P:chorismate biosynthetic process"/>
    <property type="evidence" value="ECO:0000318"/>
    <property type="project" value="GO_Central"/>
</dbReference>
<dbReference type="GO" id="GO:0000122">
    <property type="term" value="P:negative regulation of transcription by RNA polymerase II"/>
    <property type="evidence" value="ECO:0000315"/>
    <property type="project" value="AspGD"/>
</dbReference>
<dbReference type="GO" id="GO:0019631">
    <property type="term" value="P:quinate catabolic process"/>
    <property type="evidence" value="ECO:0000315"/>
    <property type="project" value="AspGD"/>
</dbReference>
<dbReference type="CDD" id="cd00502">
    <property type="entry name" value="DHQase_I"/>
    <property type="match status" value="1"/>
</dbReference>
<dbReference type="CDD" id="cd01065">
    <property type="entry name" value="NAD_bind_Shikimate_DH"/>
    <property type="match status" value="1"/>
</dbReference>
<dbReference type="FunFam" id="3.40.50.10860:FF:000019">
    <property type="entry name" value="Quinate pathway repressor protein QutR"/>
    <property type="match status" value="1"/>
</dbReference>
<dbReference type="FunFam" id="3.40.50.300:FF:002254">
    <property type="entry name" value="Quinate pathway repressor protein QutR"/>
    <property type="match status" value="1"/>
</dbReference>
<dbReference type="FunFam" id="3.40.50.720:FF:000386">
    <property type="entry name" value="Quinate repressor protein"/>
    <property type="match status" value="1"/>
</dbReference>
<dbReference type="Gene3D" id="3.20.20.70">
    <property type="entry name" value="Aldolase class I"/>
    <property type="match status" value="1"/>
</dbReference>
<dbReference type="Gene3D" id="3.40.50.10860">
    <property type="entry name" value="Leucine Dehydrogenase, chain A, domain 1"/>
    <property type="match status" value="1"/>
</dbReference>
<dbReference type="Gene3D" id="3.40.50.720">
    <property type="entry name" value="NAD(P)-binding Rossmann-like Domain"/>
    <property type="match status" value="1"/>
</dbReference>
<dbReference type="Gene3D" id="3.40.50.300">
    <property type="entry name" value="P-loop containing nucleotide triphosphate hydrolases"/>
    <property type="match status" value="1"/>
</dbReference>
<dbReference type="InterPro" id="IPR013785">
    <property type="entry name" value="Aldolase_TIM"/>
</dbReference>
<dbReference type="InterPro" id="IPR046346">
    <property type="entry name" value="Aminoacid_DH-like_N_sf"/>
</dbReference>
<dbReference type="InterPro" id="IPR001381">
    <property type="entry name" value="DHquinase_I"/>
</dbReference>
<dbReference type="InterPro" id="IPR036291">
    <property type="entry name" value="NAD(P)-bd_dom_sf"/>
</dbReference>
<dbReference type="InterPro" id="IPR027417">
    <property type="entry name" value="P-loop_NTPase"/>
</dbReference>
<dbReference type="InterPro" id="IPR041121">
    <property type="entry name" value="SDH_C"/>
</dbReference>
<dbReference type="InterPro" id="IPR031322">
    <property type="entry name" value="Shikimate/glucono_kinase"/>
</dbReference>
<dbReference type="InterPro" id="IPR013708">
    <property type="entry name" value="Shikimate_DH-bd_N"/>
</dbReference>
<dbReference type="InterPro" id="IPR006151">
    <property type="entry name" value="Shikm_DH/Glu-tRNA_Rdtase"/>
</dbReference>
<dbReference type="PANTHER" id="PTHR21090">
    <property type="entry name" value="AROM/DEHYDROQUINATE SYNTHASE"/>
    <property type="match status" value="1"/>
</dbReference>
<dbReference type="PANTHER" id="PTHR21090:SF27">
    <property type="entry name" value="QUINATE REPRESSOR PROTEIN"/>
    <property type="match status" value="1"/>
</dbReference>
<dbReference type="Pfam" id="PF01487">
    <property type="entry name" value="DHquinase_I"/>
    <property type="match status" value="1"/>
</dbReference>
<dbReference type="Pfam" id="PF18317">
    <property type="entry name" value="SDH_C"/>
    <property type="match status" value="1"/>
</dbReference>
<dbReference type="Pfam" id="PF01488">
    <property type="entry name" value="Shikimate_DH"/>
    <property type="match status" value="1"/>
</dbReference>
<dbReference type="Pfam" id="PF08501">
    <property type="entry name" value="Shikimate_dh_N"/>
    <property type="match status" value="1"/>
</dbReference>
<dbReference type="Pfam" id="PF01202">
    <property type="entry name" value="SKI"/>
    <property type="match status" value="1"/>
</dbReference>
<dbReference type="PRINTS" id="PR01100">
    <property type="entry name" value="SHIKIMTKNASE"/>
</dbReference>
<dbReference type="SUPFAM" id="SSF51569">
    <property type="entry name" value="Aldolase"/>
    <property type="match status" value="1"/>
</dbReference>
<dbReference type="SUPFAM" id="SSF53223">
    <property type="entry name" value="Aminoacid dehydrogenase-like, N-terminal domain"/>
    <property type="match status" value="1"/>
</dbReference>
<dbReference type="SUPFAM" id="SSF51735">
    <property type="entry name" value="NAD(P)-binding Rossmann-fold domains"/>
    <property type="match status" value="1"/>
</dbReference>
<dbReference type="SUPFAM" id="SSF52540">
    <property type="entry name" value="P-loop containing nucleoside triphosphate hydrolases"/>
    <property type="match status" value="1"/>
</dbReference>
<comment type="function">
    <text evidence="2 3 4">Multi-domain repressor protein that negatively regulates transcription of the quinate utilization pathway genes. May mediate its repressor activity by binding directly to the qutA activator protein.</text>
</comment>
<comment type="subunit">
    <text evidence="2 5">Interacts with qutA; transcriptional activator of the quinate utilization pathway genes.</text>
</comment>
<comment type="domain">
    <text evidence="2 3 4">Is homologous throughout its length with the C-terminal 3 domains of the pentafunctional AROM protein. The function of the 2 C-terminal domains may be to act as a molecular sensor that detects the presence of quinate pathway intermediates as a prerequisite for the presumed conformational changes necessary for the control of transcription regulation.</text>
</comment>
<comment type="similarity">
    <text evidence="6">In the N-terminal section; belongs to the shikimate kinase family.</text>
</comment>
<comment type="similarity">
    <text evidence="6">In the 2nd section; belongs to the type-I 3-dehydroquinase family.</text>
</comment>
<comment type="similarity">
    <text evidence="6">In the C-terminal section; belongs to the shikimate dehydrogenase family.</text>
</comment>
<accession>Q00784</accession>
<accession>C8VTB5</accession>
<accession>Q04133</accession>
<accession>Q5BE98</accession>
<reference key="1">
    <citation type="journal article" date="1992" name="Gene">
        <title>Structure of the Aspergillus nidulans qut repressor-encoding gene: implications for the regulation of transcription initiation.</title>
        <authorList>
            <person name="Hawkins A.R."/>
            <person name="Lamb H.K."/>
            <person name="Roberts C.F."/>
        </authorList>
    </citation>
    <scope>NUCLEOTIDE SEQUENCE [GENOMIC DNA]</scope>
</reference>
<reference key="2">
    <citation type="submission" date="1991-06" db="EMBL/GenBank/DDBJ databases">
        <authorList>
            <person name="Geever R.F."/>
        </authorList>
    </citation>
    <scope>NUCLEOTIDE SEQUENCE [GENOMIC DNA]</scope>
    <source>
        <strain>FGSC A4 / ATCC 38163 / CBS 112.46 / NRRL 194 / M139</strain>
    </source>
</reference>
<reference key="3">
    <citation type="journal article" date="2005" name="Nature">
        <title>Sequencing of Aspergillus nidulans and comparative analysis with A. fumigatus and A. oryzae.</title>
        <authorList>
            <person name="Galagan J.E."/>
            <person name="Calvo S.E."/>
            <person name="Cuomo C."/>
            <person name="Ma L.-J."/>
            <person name="Wortman J.R."/>
            <person name="Batzoglou S."/>
            <person name="Lee S.-I."/>
            <person name="Bastuerkmen M."/>
            <person name="Spevak C.C."/>
            <person name="Clutterbuck J."/>
            <person name="Kapitonov V."/>
            <person name="Jurka J."/>
            <person name="Scazzocchio C."/>
            <person name="Farman M.L."/>
            <person name="Butler J."/>
            <person name="Purcell S."/>
            <person name="Harris S."/>
            <person name="Braus G.H."/>
            <person name="Draht O."/>
            <person name="Busch S."/>
            <person name="D'Enfert C."/>
            <person name="Bouchier C."/>
            <person name="Goldman G.H."/>
            <person name="Bell-Pedersen D."/>
            <person name="Griffiths-Jones S."/>
            <person name="Doonan J.H."/>
            <person name="Yu J."/>
            <person name="Vienken K."/>
            <person name="Pain A."/>
            <person name="Freitag M."/>
            <person name="Selker E.U."/>
            <person name="Archer D.B."/>
            <person name="Penalva M.A."/>
            <person name="Oakley B.R."/>
            <person name="Momany M."/>
            <person name="Tanaka T."/>
            <person name="Kumagai T."/>
            <person name="Asai K."/>
            <person name="Machida M."/>
            <person name="Nierman W.C."/>
            <person name="Denning D.W."/>
            <person name="Caddick M.X."/>
            <person name="Hynes M."/>
            <person name="Paoletti M."/>
            <person name="Fischer R."/>
            <person name="Miller B.L."/>
            <person name="Dyer P.S."/>
            <person name="Sachs M.S."/>
            <person name="Osmani S.A."/>
            <person name="Birren B.W."/>
        </authorList>
    </citation>
    <scope>NUCLEOTIDE SEQUENCE [LARGE SCALE GENOMIC DNA]</scope>
    <source>
        <strain>FGSC A4 / ATCC 38163 / CBS 112.46 / NRRL 194 / M139</strain>
    </source>
</reference>
<reference key="4">
    <citation type="journal article" date="2009" name="Fungal Genet. Biol.">
        <title>The 2008 update of the Aspergillus nidulans genome annotation: a community effort.</title>
        <authorList>
            <person name="Wortman J.R."/>
            <person name="Gilsenan J.M."/>
            <person name="Joardar V."/>
            <person name="Deegan J."/>
            <person name="Clutterbuck J."/>
            <person name="Andersen M.R."/>
            <person name="Archer D."/>
            <person name="Bencina M."/>
            <person name="Braus G."/>
            <person name="Coutinho P."/>
            <person name="von Dohren H."/>
            <person name="Doonan J."/>
            <person name="Driessen A.J."/>
            <person name="Durek P."/>
            <person name="Espeso E."/>
            <person name="Fekete E."/>
            <person name="Flipphi M."/>
            <person name="Estrada C.G."/>
            <person name="Geysens S."/>
            <person name="Goldman G."/>
            <person name="de Groot P.W."/>
            <person name="Hansen K."/>
            <person name="Harris S.D."/>
            <person name="Heinekamp T."/>
            <person name="Helmstaedt K."/>
            <person name="Henrissat B."/>
            <person name="Hofmann G."/>
            <person name="Homan T."/>
            <person name="Horio T."/>
            <person name="Horiuchi H."/>
            <person name="James S."/>
            <person name="Jones M."/>
            <person name="Karaffa L."/>
            <person name="Karanyi Z."/>
            <person name="Kato M."/>
            <person name="Keller N."/>
            <person name="Kelly D.E."/>
            <person name="Kiel J.A."/>
            <person name="Kim J.M."/>
            <person name="van der Klei I.J."/>
            <person name="Klis F.M."/>
            <person name="Kovalchuk A."/>
            <person name="Krasevec N."/>
            <person name="Kubicek C.P."/>
            <person name="Liu B."/>
            <person name="Maccabe A."/>
            <person name="Meyer V."/>
            <person name="Mirabito P."/>
            <person name="Miskei M."/>
            <person name="Mos M."/>
            <person name="Mullins J."/>
            <person name="Nelson D.R."/>
            <person name="Nielsen J."/>
            <person name="Oakley B.R."/>
            <person name="Osmani S.A."/>
            <person name="Pakula T."/>
            <person name="Paszewski A."/>
            <person name="Paulsen I."/>
            <person name="Pilsyk S."/>
            <person name="Pocsi I."/>
            <person name="Punt P.J."/>
            <person name="Ram A.F."/>
            <person name="Ren Q."/>
            <person name="Robellet X."/>
            <person name="Robson G."/>
            <person name="Seiboth B."/>
            <person name="van Solingen P."/>
            <person name="Specht T."/>
            <person name="Sun J."/>
            <person name="Taheri-Talesh N."/>
            <person name="Takeshita N."/>
            <person name="Ussery D."/>
            <person name="vanKuyk P.A."/>
            <person name="Visser H."/>
            <person name="van de Vondervoort P.J."/>
            <person name="de Vries R.P."/>
            <person name="Walton J."/>
            <person name="Xiang X."/>
            <person name="Xiong Y."/>
            <person name="Zeng A.P."/>
            <person name="Brandt B.W."/>
            <person name="Cornell M.J."/>
            <person name="van den Hondel C.A."/>
            <person name="Visser J."/>
            <person name="Oliver S.G."/>
            <person name="Turner G."/>
        </authorList>
    </citation>
    <scope>GENOME REANNOTATION</scope>
    <source>
        <strain>FGSC A4 / ATCC 38163 / CBS 112.46 / NRRL 194 / M139</strain>
    </source>
</reference>
<reference key="5">
    <citation type="journal article" date="1993" name="Gene">
        <title>Genesis of eukaryotic transcriptional activator and repressor proteins by splitting a multidomain anabolic enzyme.</title>
        <authorList>
            <person name="Hawkins A.R."/>
            <person name="Lamb H.K."/>
            <person name="Moore J.D."/>
            <person name="Roberts C.F."/>
        </authorList>
    </citation>
    <scope>FUNCTION</scope>
    <scope>DOMAINS</scope>
</reference>
<reference key="6">
    <citation type="journal article" date="1996" name="Microbiology">
        <title>The QUTA activator and QUTR repressor proteins of Aspergillus nidulans interact to regulate transcription of the quinate utilization pathway genese.</title>
        <authorList>
            <person name="Lamb H.K."/>
            <person name="Newton G.H."/>
            <person name="Levett L.J."/>
            <person name="Cairns E."/>
            <person name="Roberts C.F."/>
            <person name="Hawkins A.R."/>
        </authorList>
    </citation>
    <scope>INTERACTION WITH QUTA</scope>
</reference>
<reference key="7">
    <citation type="journal article" date="1996" name="Biochem. J.">
        <title>Comparative analysis of the QUTR transcription repressor protein and the three C-terminal domains of the pentafunctional AROM enzyme.</title>
        <authorList>
            <person name="Lamb H.K."/>
            <person name="Moore J.D."/>
            <person name="Lakey J.H."/>
            <person name="Levett L.J."/>
            <person name="Wheeler K.A."/>
            <person name="Lago H."/>
            <person name="Coggins J.R."/>
            <person name="Hawkins A.R."/>
        </authorList>
    </citation>
    <scope>FUNCTION</scope>
    <scope>DOMAINS</scope>
</reference>
<reference key="8">
    <citation type="journal article" date="2000" name="Biochem. J.">
        <title>Identification of domains responsible for signal recognition and transduction within the QUTR transcription repressor protein.</title>
        <authorList>
            <person name="Levett L.J."/>
            <person name="Si-Hoe S.M."/>
            <person name="Liddle S."/>
            <person name="Wheeler K."/>
            <person name="Smith D."/>
            <person name="Lamb H.K."/>
            <person name="Newton G.H."/>
            <person name="Coggins J.R."/>
            <person name="Hawkins A.R."/>
        </authorList>
    </citation>
    <scope>FUNCTION</scope>
    <scope>INTERACTION WITH QUTA</scope>
    <scope>DOMAIN</scope>
</reference>
<organism>
    <name type="scientific">Emericella nidulans (strain FGSC A4 / ATCC 38163 / CBS 112.46 / NRRL 194 / M139)</name>
    <name type="common">Aspergillus nidulans</name>
    <dbReference type="NCBI Taxonomy" id="227321"/>
    <lineage>
        <taxon>Eukaryota</taxon>
        <taxon>Fungi</taxon>
        <taxon>Dikarya</taxon>
        <taxon>Ascomycota</taxon>
        <taxon>Pezizomycotina</taxon>
        <taxon>Eurotiomycetes</taxon>
        <taxon>Eurotiomycetidae</taxon>
        <taxon>Eurotiales</taxon>
        <taxon>Aspergillaceae</taxon>
        <taxon>Aspergillus</taxon>
        <taxon>Aspergillus subgen. Nidulantes</taxon>
    </lineage>
</organism>
<protein>
    <recommendedName>
        <fullName>Quinate repressor protein</fullName>
    </recommendedName>
</protein>
<feature type="chain" id="PRO_0000402436" description="Quinate repressor protein">
    <location>
        <begin position="1"/>
        <end position="901"/>
    </location>
</feature>
<feature type="region of interest" description="Sufficient for repression">
    <location>
        <begin position="1"/>
        <end position="88"/>
    </location>
</feature>
<feature type="region of interest" description="Disordered" evidence="1">
    <location>
        <begin position="26"/>
        <end position="59"/>
    </location>
</feature>
<feature type="region of interest" description="Disordered" evidence="1">
    <location>
        <begin position="878"/>
        <end position="901"/>
    </location>
</feature>
<feature type="compositionally biased region" description="Polar residues" evidence="1">
    <location>
        <begin position="31"/>
        <end position="43"/>
    </location>
</feature>